<proteinExistence type="inferred from homology"/>
<gene>
    <name evidence="1" type="primary">truD</name>
    <name type="ordered locus">XOO2959</name>
</gene>
<feature type="chain" id="PRO_0000152533" description="tRNA pseudouridine synthase D">
    <location>
        <begin position="1"/>
        <end position="369"/>
    </location>
</feature>
<feature type="domain" description="TRUD" evidence="1">
    <location>
        <begin position="156"/>
        <end position="318"/>
    </location>
</feature>
<feature type="active site" description="Nucleophile" evidence="1">
    <location>
        <position position="80"/>
    </location>
</feature>
<keyword id="KW-0413">Isomerase</keyword>
<keyword id="KW-1185">Reference proteome</keyword>
<keyword id="KW-0819">tRNA processing</keyword>
<evidence type="ECO:0000255" key="1">
    <source>
        <dbReference type="HAMAP-Rule" id="MF_01082"/>
    </source>
</evidence>
<evidence type="ECO:0000305" key="2"/>
<name>TRUD_XANOR</name>
<dbReference type="EC" id="5.4.99.27" evidence="1"/>
<dbReference type="EMBL" id="AE013598">
    <property type="protein sequence ID" value="AAW76213.1"/>
    <property type="status" value="ALT_INIT"/>
    <property type="molecule type" value="Genomic_DNA"/>
</dbReference>
<dbReference type="SMR" id="Q5GYK8"/>
<dbReference type="STRING" id="291331.XOO2959"/>
<dbReference type="KEGG" id="xoo:XOO2959"/>
<dbReference type="HOGENOM" id="CLU_005281_4_0_6"/>
<dbReference type="Proteomes" id="UP000006735">
    <property type="component" value="Chromosome"/>
</dbReference>
<dbReference type="GO" id="GO:0005829">
    <property type="term" value="C:cytosol"/>
    <property type="evidence" value="ECO:0007669"/>
    <property type="project" value="TreeGrafter"/>
</dbReference>
<dbReference type="GO" id="GO:0003723">
    <property type="term" value="F:RNA binding"/>
    <property type="evidence" value="ECO:0007669"/>
    <property type="project" value="InterPro"/>
</dbReference>
<dbReference type="GO" id="GO:0160150">
    <property type="term" value="F:tRNA pseudouridine(13) synthase activity"/>
    <property type="evidence" value="ECO:0007669"/>
    <property type="project" value="UniProtKB-EC"/>
</dbReference>
<dbReference type="GO" id="GO:0031119">
    <property type="term" value="P:tRNA pseudouridine synthesis"/>
    <property type="evidence" value="ECO:0007669"/>
    <property type="project" value="UniProtKB-UniRule"/>
</dbReference>
<dbReference type="CDD" id="cd02575">
    <property type="entry name" value="PseudoU_synth_EcTruD"/>
    <property type="match status" value="1"/>
</dbReference>
<dbReference type="Gene3D" id="3.30.2350.20">
    <property type="entry name" value="TruD, catalytic domain"/>
    <property type="match status" value="1"/>
</dbReference>
<dbReference type="Gene3D" id="3.30.2340.10">
    <property type="entry name" value="TruD, insertion domain"/>
    <property type="match status" value="1"/>
</dbReference>
<dbReference type="HAMAP" id="MF_01082">
    <property type="entry name" value="TruD"/>
    <property type="match status" value="1"/>
</dbReference>
<dbReference type="InterPro" id="IPR020103">
    <property type="entry name" value="PsdUridine_synth_cat_dom_sf"/>
</dbReference>
<dbReference type="InterPro" id="IPR001656">
    <property type="entry name" value="PsdUridine_synth_TruD"/>
</dbReference>
<dbReference type="InterPro" id="IPR020119">
    <property type="entry name" value="PsdUridine_synth_TruD_CS"/>
</dbReference>
<dbReference type="InterPro" id="IPR011760">
    <property type="entry name" value="PsdUridine_synth_TruD_insert"/>
</dbReference>
<dbReference type="InterPro" id="IPR042214">
    <property type="entry name" value="TruD_catalytic"/>
</dbReference>
<dbReference type="InterPro" id="IPR043165">
    <property type="entry name" value="TruD_insert_sf"/>
</dbReference>
<dbReference type="InterPro" id="IPR050170">
    <property type="entry name" value="TruD_pseudoU_synthase"/>
</dbReference>
<dbReference type="NCBIfam" id="NF002153">
    <property type="entry name" value="PRK00984.1-2"/>
    <property type="match status" value="1"/>
</dbReference>
<dbReference type="PANTHER" id="PTHR47811">
    <property type="entry name" value="TRNA PSEUDOURIDINE SYNTHASE D"/>
    <property type="match status" value="1"/>
</dbReference>
<dbReference type="PANTHER" id="PTHR47811:SF1">
    <property type="entry name" value="TRNA PSEUDOURIDINE SYNTHASE D"/>
    <property type="match status" value="1"/>
</dbReference>
<dbReference type="Pfam" id="PF01142">
    <property type="entry name" value="TruD"/>
    <property type="match status" value="2"/>
</dbReference>
<dbReference type="SUPFAM" id="SSF55120">
    <property type="entry name" value="Pseudouridine synthase"/>
    <property type="match status" value="1"/>
</dbReference>
<dbReference type="PROSITE" id="PS50984">
    <property type="entry name" value="TRUD"/>
    <property type="match status" value="1"/>
</dbReference>
<dbReference type="PROSITE" id="PS01268">
    <property type="entry name" value="UPF0024"/>
    <property type="match status" value="1"/>
</dbReference>
<accession>Q5GYK8</accession>
<comment type="function">
    <text evidence="1">Responsible for synthesis of pseudouridine from uracil-13 in transfer RNAs.</text>
</comment>
<comment type="catalytic activity">
    <reaction evidence="1">
        <text>uridine(13) in tRNA = pseudouridine(13) in tRNA</text>
        <dbReference type="Rhea" id="RHEA:42540"/>
        <dbReference type="Rhea" id="RHEA-COMP:10105"/>
        <dbReference type="Rhea" id="RHEA-COMP:10106"/>
        <dbReference type="ChEBI" id="CHEBI:65314"/>
        <dbReference type="ChEBI" id="CHEBI:65315"/>
        <dbReference type="EC" id="5.4.99.27"/>
    </reaction>
</comment>
<comment type="similarity">
    <text evidence="1">Belongs to the pseudouridine synthase TruD family.</text>
</comment>
<comment type="sequence caution" evidence="2">
    <conflict type="erroneous initiation">
        <sequence resource="EMBL-CDS" id="AAW76213"/>
    </conflict>
</comment>
<sequence length="369" mass="40254">MSETSLLPRAHGAAVLSAAMRSTPDDFQVDELPAFEPSGEGEHLLLTVCKRGQNTAYIAKKLAHWAGIAEMGVGYAGLKDRHAVTTQRFSVHLPKRIAPDIAALDDAQMQVIDSTWHNRKLQRGALHGNGFVLTLRQVHGERDAVEERLQAIAARGIPNWFGEQRFGRDGGNVAAALVMFGYVQAADGTLAPAPTSRRRLRNDQRSMLLSAARSALFNRVLTARVEQDSWDSALEGEAWMLDGSRSVFGPEPWSDALAERLACFDIHPSGPLWGAGALRSTDQAAAVEQGALSDPQSEALRQGLEAAGLKQERRALRLRPQGLDYRWLEAQTLQLEFALPPGCYATAVLWELGEVTDAGRFDAGVRSDE</sequence>
<protein>
    <recommendedName>
        <fullName evidence="1">tRNA pseudouridine synthase D</fullName>
        <ecNumber evidence="1">5.4.99.27</ecNumber>
    </recommendedName>
    <alternativeName>
        <fullName evidence="1">tRNA pseudouridine(13) synthase</fullName>
    </alternativeName>
    <alternativeName>
        <fullName evidence="1">tRNA pseudouridylate synthase D</fullName>
    </alternativeName>
    <alternativeName>
        <fullName evidence="1">tRNA-uridine isomerase D</fullName>
    </alternativeName>
</protein>
<reference key="1">
    <citation type="journal article" date="2005" name="Nucleic Acids Res.">
        <title>The genome sequence of Xanthomonas oryzae pathovar oryzae KACC10331, the bacterial blight pathogen of rice.</title>
        <authorList>
            <person name="Lee B.-M."/>
            <person name="Park Y.-J."/>
            <person name="Park D.-S."/>
            <person name="Kang H.-W."/>
            <person name="Kim J.-G."/>
            <person name="Song E.-S."/>
            <person name="Park I.-C."/>
            <person name="Yoon U.-H."/>
            <person name="Hahn J.-H."/>
            <person name="Koo B.-S."/>
            <person name="Lee G.-B."/>
            <person name="Kim H."/>
            <person name="Park H.-S."/>
            <person name="Yoon K.-O."/>
            <person name="Kim J.-H."/>
            <person name="Jung C.-H."/>
            <person name="Koh N.-H."/>
            <person name="Seo J.-S."/>
            <person name="Go S.-J."/>
        </authorList>
    </citation>
    <scope>NUCLEOTIDE SEQUENCE [LARGE SCALE GENOMIC DNA]</scope>
    <source>
        <strain>KACC10331 / KXO85</strain>
    </source>
</reference>
<organism>
    <name type="scientific">Xanthomonas oryzae pv. oryzae (strain KACC10331 / KXO85)</name>
    <dbReference type="NCBI Taxonomy" id="291331"/>
    <lineage>
        <taxon>Bacteria</taxon>
        <taxon>Pseudomonadati</taxon>
        <taxon>Pseudomonadota</taxon>
        <taxon>Gammaproteobacteria</taxon>
        <taxon>Lysobacterales</taxon>
        <taxon>Lysobacteraceae</taxon>
        <taxon>Xanthomonas</taxon>
    </lineage>
</organism>